<proteinExistence type="inferred from homology"/>
<dbReference type="EC" id="3.1.2.-"/>
<dbReference type="EMBL" id="AE001363">
    <property type="protein sequence ID" value="AAD18793.1"/>
    <property type="molecule type" value="Genomic_DNA"/>
</dbReference>
<dbReference type="EMBL" id="AE002161">
    <property type="protein sequence ID" value="AAF37977.1"/>
    <property type="molecule type" value="Genomic_DNA"/>
</dbReference>
<dbReference type="EMBL" id="BA000008">
    <property type="protein sequence ID" value="BAA98861.1"/>
    <property type="molecule type" value="Genomic_DNA"/>
</dbReference>
<dbReference type="EMBL" id="AE009440">
    <property type="protein sequence ID" value="AAP98609.1"/>
    <property type="molecule type" value="Genomic_DNA"/>
</dbReference>
<dbReference type="PIR" id="C86572">
    <property type="entry name" value="C86572"/>
</dbReference>
<dbReference type="PIR" id="G72051">
    <property type="entry name" value="G72051"/>
</dbReference>
<dbReference type="RefSeq" id="NP_224850.1">
    <property type="nucleotide sequence ID" value="NC_000922.1"/>
</dbReference>
<dbReference type="RefSeq" id="WP_010883292.1">
    <property type="nucleotide sequence ID" value="NZ_LN847257.1"/>
</dbReference>
<dbReference type="SMR" id="Q9Z7Q0"/>
<dbReference type="STRING" id="406984.CPK_ORF00054"/>
<dbReference type="GeneID" id="45050704"/>
<dbReference type="KEGG" id="cpa:CP_0093"/>
<dbReference type="KEGG" id="cpj:yciA"/>
<dbReference type="KEGG" id="cpn:CPn_0654"/>
<dbReference type="KEGG" id="cpt:CpB0680"/>
<dbReference type="PATRIC" id="fig|115713.3.peg.724"/>
<dbReference type="eggNOG" id="COG1607">
    <property type="taxonomic scope" value="Bacteria"/>
</dbReference>
<dbReference type="HOGENOM" id="CLU_050164_3_2_0"/>
<dbReference type="OMA" id="MDEMAFL"/>
<dbReference type="OrthoDB" id="9791628at2"/>
<dbReference type="Proteomes" id="UP000000583">
    <property type="component" value="Chromosome"/>
</dbReference>
<dbReference type="Proteomes" id="UP000000801">
    <property type="component" value="Chromosome"/>
</dbReference>
<dbReference type="GO" id="GO:0005829">
    <property type="term" value="C:cytosol"/>
    <property type="evidence" value="ECO:0007669"/>
    <property type="project" value="TreeGrafter"/>
</dbReference>
<dbReference type="GO" id="GO:0052816">
    <property type="term" value="F:long-chain fatty acyl-CoA hydrolase activity"/>
    <property type="evidence" value="ECO:0007669"/>
    <property type="project" value="TreeGrafter"/>
</dbReference>
<dbReference type="GO" id="GO:0006637">
    <property type="term" value="P:acyl-CoA metabolic process"/>
    <property type="evidence" value="ECO:0007669"/>
    <property type="project" value="TreeGrafter"/>
</dbReference>
<dbReference type="CDD" id="cd03442">
    <property type="entry name" value="BFIT_BACH"/>
    <property type="match status" value="1"/>
</dbReference>
<dbReference type="Gene3D" id="3.10.129.10">
    <property type="entry name" value="Hotdog Thioesterase"/>
    <property type="match status" value="1"/>
</dbReference>
<dbReference type="InterPro" id="IPR040170">
    <property type="entry name" value="Cytosol_ACT"/>
</dbReference>
<dbReference type="InterPro" id="IPR033120">
    <property type="entry name" value="HOTDOG_ACOT"/>
</dbReference>
<dbReference type="InterPro" id="IPR029069">
    <property type="entry name" value="HotDog_dom_sf"/>
</dbReference>
<dbReference type="InterPro" id="IPR006683">
    <property type="entry name" value="Thioestr_dom"/>
</dbReference>
<dbReference type="PANTHER" id="PTHR11049">
    <property type="entry name" value="ACYL COENZYME A THIOESTER HYDROLASE"/>
    <property type="match status" value="1"/>
</dbReference>
<dbReference type="PANTHER" id="PTHR11049:SF16">
    <property type="entry name" value="PROTEIN VDLD"/>
    <property type="match status" value="1"/>
</dbReference>
<dbReference type="Pfam" id="PF03061">
    <property type="entry name" value="4HBT"/>
    <property type="match status" value="1"/>
</dbReference>
<dbReference type="SUPFAM" id="SSF54637">
    <property type="entry name" value="Thioesterase/thiol ester dehydrase-isomerase"/>
    <property type="match status" value="1"/>
</dbReference>
<dbReference type="PROSITE" id="PS51770">
    <property type="entry name" value="HOTDOG_ACOT"/>
    <property type="match status" value="1"/>
</dbReference>
<feature type="chain" id="PRO_0000053829" description="Uncharacterized acyl-CoA thioester hydrolase CPn_0654/CP_0093/CPj0654/CpB0680">
    <location>
        <begin position="1"/>
        <end position="155"/>
    </location>
</feature>
<feature type="domain" description="HotDog ACOT-type" evidence="1">
    <location>
        <begin position="9"/>
        <end position="121"/>
    </location>
</feature>
<name>Y654_CHLPN</name>
<keyword id="KW-0378">Hydrolase</keyword>
<accession>Q9Z7Q0</accession>
<organism>
    <name type="scientific">Chlamydia pneumoniae</name>
    <name type="common">Chlamydophila pneumoniae</name>
    <dbReference type="NCBI Taxonomy" id="83558"/>
    <lineage>
        <taxon>Bacteria</taxon>
        <taxon>Pseudomonadati</taxon>
        <taxon>Chlamydiota</taxon>
        <taxon>Chlamydiia</taxon>
        <taxon>Chlamydiales</taxon>
        <taxon>Chlamydiaceae</taxon>
        <taxon>Chlamydia/Chlamydophila group</taxon>
        <taxon>Chlamydia</taxon>
    </lineage>
</organism>
<evidence type="ECO:0000255" key="1">
    <source>
        <dbReference type="PROSITE-ProRule" id="PRU01106"/>
    </source>
</evidence>
<evidence type="ECO:0000305" key="2"/>
<comment type="similarity">
    <text evidence="2">Belongs to the acyl coenzyme A hydrolase family.</text>
</comment>
<gene>
    <name type="ordered locus">CPn_0654</name>
    <name type="ordered locus">CP_0093</name>
    <name type="ordered locus">CPj0654</name>
    <name type="ordered locus">CpB0680</name>
</gene>
<reference key="1">
    <citation type="journal article" date="1999" name="Nat. Genet.">
        <title>Comparative genomes of Chlamydia pneumoniae and C. trachomatis.</title>
        <authorList>
            <person name="Kalman S."/>
            <person name="Mitchell W.P."/>
            <person name="Marathe R."/>
            <person name="Lammel C.J."/>
            <person name="Fan J."/>
            <person name="Hyman R.W."/>
            <person name="Olinger L."/>
            <person name="Grimwood J."/>
            <person name="Davis R.W."/>
            <person name="Stephens R.S."/>
        </authorList>
    </citation>
    <scope>NUCLEOTIDE SEQUENCE [LARGE SCALE GENOMIC DNA]</scope>
    <source>
        <strain>CWL029</strain>
    </source>
</reference>
<reference key="2">
    <citation type="journal article" date="2000" name="Nucleic Acids Res.">
        <title>Genome sequences of Chlamydia trachomatis MoPn and Chlamydia pneumoniae AR39.</title>
        <authorList>
            <person name="Read T.D."/>
            <person name="Brunham R.C."/>
            <person name="Shen C."/>
            <person name="Gill S.R."/>
            <person name="Heidelberg J.F."/>
            <person name="White O."/>
            <person name="Hickey E.K."/>
            <person name="Peterson J.D."/>
            <person name="Utterback T.R."/>
            <person name="Berry K.J."/>
            <person name="Bass S."/>
            <person name="Linher K.D."/>
            <person name="Weidman J.F."/>
            <person name="Khouri H.M."/>
            <person name="Craven B."/>
            <person name="Bowman C."/>
            <person name="Dodson R.J."/>
            <person name="Gwinn M.L."/>
            <person name="Nelson W.C."/>
            <person name="DeBoy R.T."/>
            <person name="Kolonay J.F."/>
            <person name="McClarty G."/>
            <person name="Salzberg S.L."/>
            <person name="Eisen J.A."/>
            <person name="Fraser C.M."/>
        </authorList>
    </citation>
    <scope>NUCLEOTIDE SEQUENCE [LARGE SCALE GENOMIC DNA]</scope>
    <source>
        <strain>AR39</strain>
    </source>
</reference>
<reference key="3">
    <citation type="journal article" date="2000" name="Nucleic Acids Res.">
        <title>Comparison of whole genome sequences of Chlamydia pneumoniae J138 from Japan and CWL029 from USA.</title>
        <authorList>
            <person name="Shirai M."/>
            <person name="Hirakawa H."/>
            <person name="Kimoto M."/>
            <person name="Tabuchi M."/>
            <person name="Kishi F."/>
            <person name="Ouchi K."/>
            <person name="Shiba T."/>
            <person name="Ishii K."/>
            <person name="Hattori M."/>
            <person name="Kuhara S."/>
            <person name="Nakazawa T."/>
        </authorList>
    </citation>
    <scope>NUCLEOTIDE SEQUENCE [LARGE SCALE GENOMIC DNA]</scope>
    <source>
        <strain>J138</strain>
    </source>
</reference>
<reference key="4">
    <citation type="submission" date="2002-05" db="EMBL/GenBank/DDBJ databases">
        <title>The genome sequence of Chlamydia pneumoniae TW183 and comparison with other Chlamydia strains based on whole genome sequence analysis.</title>
        <authorList>
            <person name="Geng M.M."/>
            <person name="Schuhmacher A."/>
            <person name="Muehldorfer I."/>
            <person name="Bensch K.W."/>
            <person name="Schaefer K.P."/>
            <person name="Schneider S."/>
            <person name="Pohl T."/>
            <person name="Essig A."/>
            <person name="Marre R."/>
            <person name="Melchers K."/>
        </authorList>
    </citation>
    <scope>NUCLEOTIDE SEQUENCE [LARGE SCALE GENOMIC DNA]</scope>
    <source>
        <strain>TW-183</strain>
    </source>
</reference>
<protein>
    <recommendedName>
        <fullName>Uncharacterized acyl-CoA thioester hydrolase CPn_0654/CP_0093/CPj0654/CpB0680</fullName>
        <ecNumber>3.1.2.-</ecNumber>
    </recommendedName>
</protein>
<sequence>MLKKKPVSFSCIDGHIYKIFPNDLNANNTVFGGLLMSLLDRLALVVAERHTESVCVTAFVDALRFYAPAYMGENLICKAAVNRTWRTSLEVGVKVWAENIYKQERRHITSAYFTFVAVNEDNQPIPVHQIVPETPEEKRRYNEADRRRQARLELK</sequence>